<proteinExistence type="evidence at protein level"/>
<comment type="function">
    <text evidence="5">Hypertrehalosaemic factors are neuropeptides that elevate the level of trehalose in the hemolymph (trehalose is the major carbohydrate in the hemolymph of insects).</text>
</comment>
<comment type="subcellular location">
    <subcellularLocation>
        <location evidence="5">Secreted</location>
    </subcellularLocation>
</comment>
<comment type="similarity">
    <text evidence="2">Belongs to the AKH/HRTH/RPCH family.</text>
</comment>
<evidence type="ECO:0000250" key="1">
    <source>
        <dbReference type="UniProtKB" id="P67790"/>
    </source>
</evidence>
<evidence type="ECO:0000255" key="2"/>
<evidence type="ECO:0000269" key="3">
    <source>
    </source>
</evidence>
<evidence type="ECO:0000303" key="4">
    <source>
    </source>
</evidence>
<evidence type="ECO:0000305" key="5"/>
<dbReference type="GO" id="GO:0005576">
    <property type="term" value="C:extracellular region"/>
    <property type="evidence" value="ECO:0007669"/>
    <property type="project" value="UniProtKB-SubCell"/>
</dbReference>
<dbReference type="GO" id="GO:0005179">
    <property type="term" value="F:hormone activity"/>
    <property type="evidence" value="ECO:0007669"/>
    <property type="project" value="UniProtKB-KW"/>
</dbReference>
<dbReference type="GO" id="GO:0007218">
    <property type="term" value="P:neuropeptide signaling pathway"/>
    <property type="evidence" value="ECO:0007669"/>
    <property type="project" value="UniProtKB-KW"/>
</dbReference>
<dbReference type="InterPro" id="IPR002047">
    <property type="entry name" value="Adipokinetic_hormone_CS"/>
</dbReference>
<dbReference type="PROSITE" id="PS00256">
    <property type="entry name" value="AKH"/>
    <property type="match status" value="1"/>
</dbReference>
<protein>
    <recommendedName>
        <fullName evidence="1">Hypertrehalosaemic factor</fullName>
    </recommendedName>
    <alternativeName>
        <fullName evidence="4">Adipokinetic hormone 1</fullName>
        <shortName evidence="4">NeoRh-AKH-1</shortName>
    </alternativeName>
    <alternativeName>
        <fullName evidence="1">Hypertrehalosaemic neuropeptide</fullName>
    </alternativeName>
</protein>
<reference evidence="5" key="1">
    <citation type="journal article" date="2009" name="BMC Evol. Biol.">
        <title>A proteomic approach for studying insect phylogeny: CAPA peptides of ancient insect taxa (Dictyoptera, Blattoptera) as a test case.</title>
        <authorList>
            <person name="Roth S."/>
            <person name="Fromm B."/>
            <person name="Gaede G."/>
            <person name="Predel R."/>
        </authorList>
    </citation>
    <scope>PROTEIN SEQUENCE</scope>
    <scope>PYROGLUTAMATE FORMATION AT GLN-1</scope>
    <scope>AMIDATION AT TRP-8</scope>
    <source>
        <tissue evidence="3">Corpora cardiaca</tissue>
    </source>
</reference>
<keyword id="KW-0027">Amidation</keyword>
<keyword id="KW-0903">Direct protein sequencing</keyword>
<keyword id="KW-0372">Hormone</keyword>
<keyword id="KW-0527">Neuropeptide</keyword>
<keyword id="KW-0873">Pyrrolidone carboxylic acid</keyword>
<keyword id="KW-0964">Secreted</keyword>
<sequence length="8" mass="991">QVNFSPNW</sequence>
<organism>
    <name type="scientific">Neostylopyga rhombifolia</name>
    <name type="common">Harlequin cockroach</name>
    <dbReference type="NCBI Taxonomy" id="304879"/>
    <lineage>
        <taxon>Eukaryota</taxon>
        <taxon>Metazoa</taxon>
        <taxon>Ecdysozoa</taxon>
        <taxon>Arthropoda</taxon>
        <taxon>Hexapoda</taxon>
        <taxon>Insecta</taxon>
        <taxon>Pterygota</taxon>
        <taxon>Neoptera</taxon>
        <taxon>Polyneoptera</taxon>
        <taxon>Dictyoptera</taxon>
        <taxon>Blattodea</taxon>
        <taxon>Blattoidea</taxon>
        <taxon>Blattidae</taxon>
        <taxon>Blattinae</taxon>
        <taxon>Neostylopyga</taxon>
    </lineage>
</organism>
<accession>P85848</accession>
<name>HTF_NEORO</name>
<feature type="peptide" id="PRO_0000378658" description="Hypertrehalosaemic factor" evidence="3">
    <location>
        <begin position="1"/>
        <end position="8"/>
    </location>
</feature>
<feature type="modified residue" description="Pyrrolidone carboxylic acid" evidence="3">
    <location>
        <position position="1"/>
    </location>
</feature>
<feature type="modified residue" description="Tryptophan amide" evidence="3">
    <location>
        <position position="8"/>
    </location>
</feature>